<gene>
    <name evidence="1" type="primary">rplW</name>
    <name type="ordered locus">Maqu_0721</name>
</gene>
<organism>
    <name type="scientific">Marinobacter nauticus (strain ATCC 700491 / DSM 11845 / VT8)</name>
    <name type="common">Marinobacter aquaeolei</name>
    <dbReference type="NCBI Taxonomy" id="351348"/>
    <lineage>
        <taxon>Bacteria</taxon>
        <taxon>Pseudomonadati</taxon>
        <taxon>Pseudomonadota</taxon>
        <taxon>Gammaproteobacteria</taxon>
        <taxon>Pseudomonadales</taxon>
        <taxon>Marinobacteraceae</taxon>
        <taxon>Marinobacter</taxon>
    </lineage>
</organism>
<sequence>MNQERIYKVLLGPHVSEKASLAAERGQVVFRVAPDATKPEIKKAVEQLFNVTVEGVQVLNRKGKLKRTIRGFGKRNDIRKAYVKLAEGQDIDFLDVE</sequence>
<evidence type="ECO:0000255" key="1">
    <source>
        <dbReference type="HAMAP-Rule" id="MF_01369"/>
    </source>
</evidence>
<evidence type="ECO:0000305" key="2"/>
<accession>A1TYJ9</accession>
<keyword id="KW-0687">Ribonucleoprotein</keyword>
<keyword id="KW-0689">Ribosomal protein</keyword>
<keyword id="KW-0694">RNA-binding</keyword>
<keyword id="KW-0699">rRNA-binding</keyword>
<name>RL23_MARN8</name>
<reference key="1">
    <citation type="journal article" date="2011" name="Appl. Environ. Microbiol.">
        <title>Genomic potential of Marinobacter aquaeolei, a biogeochemical 'opportunitroph'.</title>
        <authorList>
            <person name="Singer E."/>
            <person name="Webb E.A."/>
            <person name="Nelson W.C."/>
            <person name="Heidelberg J.F."/>
            <person name="Ivanova N."/>
            <person name="Pati A."/>
            <person name="Edwards K.J."/>
        </authorList>
    </citation>
    <scope>NUCLEOTIDE SEQUENCE [LARGE SCALE GENOMIC DNA]</scope>
    <source>
        <strain>ATCC 700491 / DSM 11845 / VT8</strain>
    </source>
</reference>
<dbReference type="EMBL" id="CP000514">
    <property type="protein sequence ID" value="ABM17818.1"/>
    <property type="molecule type" value="Genomic_DNA"/>
</dbReference>
<dbReference type="RefSeq" id="WP_008174862.1">
    <property type="nucleotide sequence ID" value="NC_008740.1"/>
</dbReference>
<dbReference type="SMR" id="A1TYJ9"/>
<dbReference type="STRING" id="351348.Maqu_0721"/>
<dbReference type="GeneID" id="94722532"/>
<dbReference type="KEGG" id="maq:Maqu_0721"/>
<dbReference type="eggNOG" id="COG0089">
    <property type="taxonomic scope" value="Bacteria"/>
</dbReference>
<dbReference type="HOGENOM" id="CLU_037562_3_1_6"/>
<dbReference type="OrthoDB" id="9793353at2"/>
<dbReference type="Proteomes" id="UP000000998">
    <property type="component" value="Chromosome"/>
</dbReference>
<dbReference type="GO" id="GO:1990904">
    <property type="term" value="C:ribonucleoprotein complex"/>
    <property type="evidence" value="ECO:0007669"/>
    <property type="project" value="UniProtKB-KW"/>
</dbReference>
<dbReference type="GO" id="GO:0005840">
    <property type="term" value="C:ribosome"/>
    <property type="evidence" value="ECO:0007669"/>
    <property type="project" value="UniProtKB-KW"/>
</dbReference>
<dbReference type="GO" id="GO:0019843">
    <property type="term" value="F:rRNA binding"/>
    <property type="evidence" value="ECO:0007669"/>
    <property type="project" value="UniProtKB-UniRule"/>
</dbReference>
<dbReference type="GO" id="GO:0003735">
    <property type="term" value="F:structural constituent of ribosome"/>
    <property type="evidence" value="ECO:0007669"/>
    <property type="project" value="InterPro"/>
</dbReference>
<dbReference type="GO" id="GO:0006412">
    <property type="term" value="P:translation"/>
    <property type="evidence" value="ECO:0007669"/>
    <property type="project" value="UniProtKB-UniRule"/>
</dbReference>
<dbReference type="FunFam" id="3.30.70.330:FF:000001">
    <property type="entry name" value="50S ribosomal protein L23"/>
    <property type="match status" value="1"/>
</dbReference>
<dbReference type="Gene3D" id="3.30.70.330">
    <property type="match status" value="1"/>
</dbReference>
<dbReference type="HAMAP" id="MF_01369_B">
    <property type="entry name" value="Ribosomal_uL23_B"/>
    <property type="match status" value="1"/>
</dbReference>
<dbReference type="InterPro" id="IPR012677">
    <property type="entry name" value="Nucleotide-bd_a/b_plait_sf"/>
</dbReference>
<dbReference type="InterPro" id="IPR013025">
    <property type="entry name" value="Ribosomal_uL23-like"/>
</dbReference>
<dbReference type="InterPro" id="IPR012678">
    <property type="entry name" value="Ribosomal_uL23/eL15/eS24_sf"/>
</dbReference>
<dbReference type="InterPro" id="IPR001014">
    <property type="entry name" value="Ribosomal_uL23_CS"/>
</dbReference>
<dbReference type="NCBIfam" id="NF004359">
    <property type="entry name" value="PRK05738.1-3"/>
    <property type="match status" value="1"/>
</dbReference>
<dbReference type="NCBIfam" id="NF004363">
    <property type="entry name" value="PRK05738.2-4"/>
    <property type="match status" value="1"/>
</dbReference>
<dbReference type="PANTHER" id="PTHR11620">
    <property type="entry name" value="60S RIBOSOMAL PROTEIN L23A"/>
    <property type="match status" value="1"/>
</dbReference>
<dbReference type="Pfam" id="PF00276">
    <property type="entry name" value="Ribosomal_L23"/>
    <property type="match status" value="1"/>
</dbReference>
<dbReference type="SUPFAM" id="SSF54189">
    <property type="entry name" value="Ribosomal proteins S24e, L23 and L15e"/>
    <property type="match status" value="1"/>
</dbReference>
<dbReference type="PROSITE" id="PS00050">
    <property type="entry name" value="RIBOSOMAL_L23"/>
    <property type="match status" value="1"/>
</dbReference>
<protein>
    <recommendedName>
        <fullName evidence="1">Large ribosomal subunit protein uL23</fullName>
    </recommendedName>
    <alternativeName>
        <fullName evidence="2">50S ribosomal protein L23</fullName>
    </alternativeName>
</protein>
<proteinExistence type="inferred from homology"/>
<comment type="function">
    <text evidence="1">One of the early assembly proteins it binds 23S rRNA. One of the proteins that surrounds the polypeptide exit tunnel on the outside of the ribosome. Forms the main docking site for trigger factor binding to the ribosome.</text>
</comment>
<comment type="subunit">
    <text evidence="1">Part of the 50S ribosomal subunit. Contacts protein L29, and trigger factor when it is bound to the ribosome.</text>
</comment>
<comment type="similarity">
    <text evidence="1">Belongs to the universal ribosomal protein uL23 family.</text>
</comment>
<feature type="chain" id="PRO_1000068105" description="Large ribosomal subunit protein uL23">
    <location>
        <begin position="1"/>
        <end position="97"/>
    </location>
</feature>